<accession>P20096</accession>
<feature type="signal peptide" evidence="3">
    <location>
        <begin position="1"/>
        <end position="24"/>
    </location>
</feature>
<feature type="chain" id="PRO_0000015542" description="Interleukin-4">
    <location>
        <begin position="25"/>
        <end position="147"/>
    </location>
</feature>
<feature type="glycosylation site" description="N-linked (GlcNAc...) asparagine" evidence="3">
    <location>
        <position position="61"/>
    </location>
</feature>
<feature type="glycosylation site" description="N-linked (GlcNAc...) asparagine" evidence="3">
    <location>
        <position position="90"/>
    </location>
</feature>
<feature type="glycosylation site" description="N-linked (GlcNAc...) asparagine" evidence="3">
    <location>
        <position position="117"/>
    </location>
</feature>
<feature type="disulfide bond" evidence="1">
    <location>
        <begin position="47"/>
        <end position="87"/>
    </location>
</feature>
<name>IL4_RAT</name>
<keyword id="KW-0075">B-cell activation</keyword>
<keyword id="KW-0202">Cytokine</keyword>
<keyword id="KW-1015">Disulfide bond</keyword>
<keyword id="KW-0325">Glycoprotein</keyword>
<keyword id="KW-0339">Growth factor</keyword>
<keyword id="KW-1185">Reference proteome</keyword>
<keyword id="KW-0964">Secreted</keyword>
<keyword id="KW-0732">Signal</keyword>
<comment type="function">
    <text evidence="2">Participates in at least several B-cell activation processes as well as of other cell types. It is a costimulator of DNA-synthesis. It induces the expression of class II MHC molecules on resting B-cells. It enhances both secretion and cell surface expression of IgE and IgG1. It also regulates the expression of the low affinity Fc receptor for IgE (CD23) on both lymphocytes and monocytes. Positively regulates IL31RA expression in macrophages. Stimulates autophagy in dendritic cells by interfering with mTORC1 signaling and through the induction of RUFY4.</text>
</comment>
<comment type="subcellular location">
    <subcellularLocation>
        <location>Secreted</location>
    </subcellularLocation>
</comment>
<comment type="similarity">
    <text evidence="4">Belongs to the IL-4/IL-13 family.</text>
</comment>
<reference key="1">
    <citation type="journal article" date="1991" name="Eur. J. Immunol.">
        <title>Molecular cloning of rat interleukin 4 cDNA and analysis of the cytokine repertoire of subsets of CD4+ T cells.</title>
        <authorList>
            <person name="McKnight A.J."/>
            <person name="Barclay A.N."/>
            <person name="Mason D.W."/>
        </authorList>
    </citation>
    <scope>NUCLEOTIDE SEQUENCE [MRNA]</scope>
</reference>
<reference key="2">
    <citation type="journal article" date="1990" name="Cytokine">
        <title>Evolutionary aspects, structure, and expression of the rat interleukin 4 gene.</title>
        <authorList>
            <person name="Richter G."/>
            <person name="Blankenstein T."/>
            <person name="Diamantstein T."/>
        </authorList>
    </citation>
    <scope>NUCLEOTIDE SEQUENCE</scope>
</reference>
<evidence type="ECO:0000250" key="1"/>
<evidence type="ECO:0000250" key="2">
    <source>
        <dbReference type="UniProtKB" id="P07750"/>
    </source>
</evidence>
<evidence type="ECO:0000255" key="3"/>
<evidence type="ECO:0000305" key="4"/>
<sequence>MGLSPHLAVTLFCFLICTGNGIHGCNDSPLREIINTLNQVTEKGTPCTEMFVPDVLTATRNTTENELICRASRVLRKFYFPRDVPPCLKNKSGVLGELRKLCRGVSGLNSLRSCTVNESTLTTLKDFLESLKSILRGKYLQSCTSMS</sequence>
<gene>
    <name type="primary">Il4</name>
    <name type="synonym">Il-4</name>
</gene>
<organism>
    <name type="scientific">Rattus norvegicus</name>
    <name type="common">Rat</name>
    <dbReference type="NCBI Taxonomy" id="10116"/>
    <lineage>
        <taxon>Eukaryota</taxon>
        <taxon>Metazoa</taxon>
        <taxon>Chordata</taxon>
        <taxon>Craniata</taxon>
        <taxon>Vertebrata</taxon>
        <taxon>Euteleostomi</taxon>
        <taxon>Mammalia</taxon>
        <taxon>Eutheria</taxon>
        <taxon>Euarchontoglires</taxon>
        <taxon>Glires</taxon>
        <taxon>Rodentia</taxon>
        <taxon>Myomorpha</taxon>
        <taxon>Muroidea</taxon>
        <taxon>Muridae</taxon>
        <taxon>Murinae</taxon>
        <taxon>Rattus</taxon>
    </lineage>
</organism>
<dbReference type="EMBL" id="X16058">
    <property type="protein sequence ID" value="CAC16091.1"/>
    <property type="molecule type" value="mRNA"/>
</dbReference>
<dbReference type="EMBL" id="X53087">
    <property type="protein sequence ID" value="CAA37256.2"/>
    <property type="molecule type" value="Genomic_DNA"/>
</dbReference>
<dbReference type="EMBL" id="X53088">
    <property type="protein sequence ID" value="CAA37256.2"/>
    <property type="status" value="JOINED"/>
    <property type="molecule type" value="Genomic_DNA"/>
</dbReference>
<dbReference type="EMBL" id="X53089">
    <property type="protein sequence ID" value="CAA37256.2"/>
    <property type="status" value="JOINED"/>
    <property type="molecule type" value="Genomic_DNA"/>
</dbReference>
<dbReference type="PIR" id="A60237">
    <property type="entry name" value="ICRT4"/>
</dbReference>
<dbReference type="RefSeq" id="NP_958427.1">
    <property type="nucleotide sequence ID" value="NM_201270.1"/>
</dbReference>
<dbReference type="SMR" id="P20096"/>
<dbReference type="FunCoup" id="P20096">
    <property type="interactions" value="94"/>
</dbReference>
<dbReference type="STRING" id="10116.ENSRNOP00000010029"/>
<dbReference type="GlyCosmos" id="P20096">
    <property type="glycosylation" value="3 sites, No reported glycans"/>
</dbReference>
<dbReference type="GlyGen" id="P20096">
    <property type="glycosylation" value="3 sites"/>
</dbReference>
<dbReference type="PhosphoSitePlus" id="P20096"/>
<dbReference type="PaxDb" id="10116-ENSRNOP00000010029"/>
<dbReference type="Ensembl" id="ENSRNOT00000010029.4">
    <property type="protein sequence ID" value="ENSRNOP00000010029.1"/>
    <property type="gene ID" value="ENSRNOG00000007624.8"/>
</dbReference>
<dbReference type="GeneID" id="287287"/>
<dbReference type="KEGG" id="rno:287287"/>
<dbReference type="UCSC" id="RGD:2898">
    <property type="organism name" value="rat"/>
</dbReference>
<dbReference type="AGR" id="RGD:2898"/>
<dbReference type="CTD" id="3565"/>
<dbReference type="RGD" id="2898">
    <property type="gene designation" value="Il4"/>
</dbReference>
<dbReference type="eggNOG" id="KOG3886">
    <property type="taxonomic scope" value="Eukaryota"/>
</dbReference>
<dbReference type="GeneTree" id="ENSGT00390000013108"/>
<dbReference type="InParanoid" id="P20096"/>
<dbReference type="OMA" id="GTPCTEM"/>
<dbReference type="OrthoDB" id="9528087at2759"/>
<dbReference type="PhylomeDB" id="P20096"/>
<dbReference type="TreeFam" id="TF336383"/>
<dbReference type="Reactome" id="R-RNO-6785807">
    <property type="pathway name" value="Interleukin-4 and Interleukin-13 signaling"/>
</dbReference>
<dbReference type="PRO" id="PR:P20096"/>
<dbReference type="Proteomes" id="UP000002494">
    <property type="component" value="Chromosome 10"/>
</dbReference>
<dbReference type="Bgee" id="ENSRNOG00000007624">
    <property type="expression patterns" value="Expressed in ileum and 5 other cell types or tissues"/>
</dbReference>
<dbReference type="ExpressionAtlas" id="P20096">
    <property type="expression patterns" value="baseline and differential"/>
</dbReference>
<dbReference type="GO" id="GO:0009897">
    <property type="term" value="C:external side of plasma membrane"/>
    <property type="evidence" value="ECO:0000266"/>
    <property type="project" value="RGD"/>
</dbReference>
<dbReference type="GO" id="GO:0005615">
    <property type="term" value="C:extracellular space"/>
    <property type="evidence" value="ECO:0000314"/>
    <property type="project" value="RGD"/>
</dbReference>
<dbReference type="GO" id="GO:0005125">
    <property type="term" value="F:cytokine activity"/>
    <property type="evidence" value="ECO:0000266"/>
    <property type="project" value="RGD"/>
</dbReference>
<dbReference type="GO" id="GO:0008083">
    <property type="term" value="F:growth factor activity"/>
    <property type="evidence" value="ECO:0007669"/>
    <property type="project" value="UniProtKB-KW"/>
</dbReference>
<dbReference type="GO" id="GO:0005136">
    <property type="term" value="F:interleukin-4 receptor binding"/>
    <property type="evidence" value="ECO:0007669"/>
    <property type="project" value="InterPro"/>
</dbReference>
<dbReference type="GO" id="GO:0050798">
    <property type="term" value="P:activated T cell proliferation"/>
    <property type="evidence" value="ECO:0000266"/>
    <property type="project" value="RGD"/>
</dbReference>
<dbReference type="GO" id="GO:0042113">
    <property type="term" value="P:B cell activation"/>
    <property type="evidence" value="ECO:0000266"/>
    <property type="project" value="RGD"/>
</dbReference>
<dbReference type="GO" id="GO:0031296">
    <property type="term" value="P:B cell costimulation"/>
    <property type="evidence" value="ECO:0000266"/>
    <property type="project" value="RGD"/>
</dbReference>
<dbReference type="GO" id="GO:0042100">
    <property type="term" value="P:B cell proliferation"/>
    <property type="evidence" value="ECO:0000266"/>
    <property type="project" value="RGD"/>
</dbReference>
<dbReference type="GO" id="GO:0007259">
    <property type="term" value="P:cell surface receptor signaling pathway via JAK-STAT"/>
    <property type="evidence" value="ECO:0000266"/>
    <property type="project" value="RGD"/>
</dbReference>
<dbReference type="GO" id="GO:0071288">
    <property type="term" value="P:cellular response to mercury ion"/>
    <property type="evidence" value="ECO:0000270"/>
    <property type="project" value="RGD"/>
</dbReference>
<dbReference type="GO" id="GO:0008203">
    <property type="term" value="P:cholesterol metabolic process"/>
    <property type="evidence" value="ECO:0000266"/>
    <property type="project" value="RGD"/>
</dbReference>
<dbReference type="GO" id="GO:0042832">
    <property type="term" value="P:defense response to protozoan"/>
    <property type="evidence" value="ECO:0000266"/>
    <property type="project" value="RGD"/>
</dbReference>
<dbReference type="GO" id="GO:0097028">
    <property type="term" value="P:dendritic cell differentiation"/>
    <property type="evidence" value="ECO:0000266"/>
    <property type="project" value="RGD"/>
</dbReference>
<dbReference type="GO" id="GO:0097191">
    <property type="term" value="P:extrinsic apoptotic signaling pathway"/>
    <property type="evidence" value="ECO:0000266"/>
    <property type="project" value="RGD"/>
</dbReference>
<dbReference type="GO" id="GO:0097192">
    <property type="term" value="P:extrinsic apoptotic signaling pathway in absence of ligand"/>
    <property type="evidence" value="ECO:0000266"/>
    <property type="project" value="RGD"/>
</dbReference>
<dbReference type="GO" id="GO:0007565">
    <property type="term" value="P:female pregnancy"/>
    <property type="evidence" value="ECO:0000270"/>
    <property type="project" value="RGD"/>
</dbReference>
<dbReference type="GO" id="GO:0002227">
    <property type="term" value="P:innate immune response in mucosa"/>
    <property type="evidence" value="ECO:0000266"/>
    <property type="project" value="RGD"/>
</dbReference>
<dbReference type="GO" id="GO:0035771">
    <property type="term" value="P:interleukin-4-mediated signaling pathway"/>
    <property type="evidence" value="ECO:0000266"/>
    <property type="project" value="RGD"/>
</dbReference>
<dbReference type="GO" id="GO:0048289">
    <property type="term" value="P:isotype switching to IgE isotypes"/>
    <property type="evidence" value="ECO:0000266"/>
    <property type="project" value="RGD"/>
</dbReference>
<dbReference type="GO" id="GO:0048291">
    <property type="term" value="P:isotype switching to IgG isotypes"/>
    <property type="evidence" value="ECO:0000266"/>
    <property type="project" value="RGD"/>
</dbReference>
<dbReference type="GO" id="GO:0042116">
    <property type="term" value="P:macrophage activation"/>
    <property type="evidence" value="ECO:0000266"/>
    <property type="project" value="RGD"/>
</dbReference>
<dbReference type="GO" id="GO:0045342">
    <property type="term" value="P:MHC class II biosynthetic process"/>
    <property type="evidence" value="ECO:0000266"/>
    <property type="project" value="RGD"/>
</dbReference>
<dbReference type="GO" id="GO:0001774">
    <property type="term" value="P:microglial cell activation"/>
    <property type="evidence" value="ECO:0000314"/>
    <property type="project" value="RGD"/>
</dbReference>
<dbReference type="GO" id="GO:0043011">
    <property type="term" value="P:myeloid dendritic cell differentiation"/>
    <property type="evidence" value="ECO:0000266"/>
    <property type="project" value="RGD"/>
</dbReference>
<dbReference type="GO" id="GO:0002674">
    <property type="term" value="P:negative regulation of acute inflammatory response"/>
    <property type="evidence" value="ECO:0000314"/>
    <property type="project" value="RGD"/>
</dbReference>
<dbReference type="GO" id="GO:1903845">
    <property type="term" value="P:negative regulation of cellular response to transforming growth factor beta stimulus"/>
    <property type="evidence" value="ECO:0000266"/>
    <property type="project" value="RGD"/>
</dbReference>
<dbReference type="GO" id="GO:0002677">
    <property type="term" value="P:negative regulation of chronic inflammatory response"/>
    <property type="evidence" value="ECO:0000314"/>
    <property type="project" value="RGD"/>
</dbReference>
<dbReference type="GO" id="GO:1903660">
    <property type="term" value="P:negative regulation of complement-dependent cytotoxicity"/>
    <property type="evidence" value="ECO:0000266"/>
    <property type="project" value="RGD"/>
</dbReference>
<dbReference type="GO" id="GO:0045892">
    <property type="term" value="P:negative regulation of DNA-templated transcription"/>
    <property type="evidence" value="ECO:0000266"/>
    <property type="project" value="RGD"/>
</dbReference>
<dbReference type="GO" id="GO:2000352">
    <property type="term" value="P:negative regulation of endothelial cell apoptotic process"/>
    <property type="evidence" value="ECO:0000266"/>
    <property type="project" value="RGD"/>
</dbReference>
<dbReference type="GO" id="GO:0010633">
    <property type="term" value="P:negative regulation of epithelial cell migration"/>
    <property type="evidence" value="ECO:0000266"/>
    <property type="project" value="RGD"/>
</dbReference>
<dbReference type="GO" id="GO:2001237">
    <property type="term" value="P:negative regulation of extrinsic apoptotic signaling pathway"/>
    <property type="evidence" value="ECO:0000266"/>
    <property type="project" value="RGD"/>
</dbReference>
<dbReference type="GO" id="GO:0050728">
    <property type="term" value="P:negative regulation of inflammatory response"/>
    <property type="evidence" value="ECO:0000266"/>
    <property type="project" value="RGD"/>
</dbReference>
<dbReference type="GO" id="GO:0043031">
    <property type="term" value="P:negative regulation of macrophage activation"/>
    <property type="evidence" value="ECO:0000315"/>
    <property type="project" value="RGD"/>
</dbReference>
<dbReference type="GO" id="GO:0045019">
    <property type="term" value="P:negative regulation of nitric oxide biosynthetic process"/>
    <property type="evidence" value="ECO:0000314"/>
    <property type="project" value="RGD"/>
</dbReference>
<dbReference type="GO" id="GO:0045671">
    <property type="term" value="P:negative regulation of osteoclast differentiation"/>
    <property type="evidence" value="ECO:0000266"/>
    <property type="project" value="RGD"/>
</dbReference>
<dbReference type="GO" id="GO:0050868">
    <property type="term" value="P:negative regulation of T cell activation"/>
    <property type="evidence" value="ECO:0000266"/>
    <property type="project" value="RGD"/>
</dbReference>
<dbReference type="GO" id="GO:2000320">
    <property type="term" value="P:negative regulation of T-helper 17 cell differentiation"/>
    <property type="evidence" value="ECO:0000266"/>
    <property type="project" value="RGD"/>
</dbReference>
<dbReference type="GO" id="GO:0000122">
    <property type="term" value="P:negative regulation of transcription by RNA polymerase II"/>
    <property type="evidence" value="ECO:0000266"/>
    <property type="project" value="RGD"/>
</dbReference>
<dbReference type="GO" id="GO:0032720">
    <property type="term" value="P:negative regulation of tumor necrosis factor production"/>
    <property type="evidence" value="ECO:0000266"/>
    <property type="project" value="RGD"/>
</dbReference>
<dbReference type="GO" id="GO:0070351">
    <property type="term" value="P:negative regulation of white fat cell proliferation"/>
    <property type="evidence" value="ECO:0000266"/>
    <property type="project" value="RGD"/>
</dbReference>
<dbReference type="GO" id="GO:0150076">
    <property type="term" value="P:neuroinflammatory response"/>
    <property type="evidence" value="ECO:0000314"/>
    <property type="project" value="ARUK-UCL"/>
</dbReference>
<dbReference type="GO" id="GO:0042104">
    <property type="term" value="P:positive regulation of activated T cell proliferation"/>
    <property type="evidence" value="ECO:0000266"/>
    <property type="project" value="RGD"/>
</dbReference>
<dbReference type="GO" id="GO:1900223">
    <property type="term" value="P:positive regulation of amyloid-beta clearance"/>
    <property type="evidence" value="ECO:0000314"/>
    <property type="project" value="ARUK-UCL"/>
</dbReference>
<dbReference type="GO" id="GO:2001171">
    <property type="term" value="P:positive regulation of ATP biosynthetic process"/>
    <property type="evidence" value="ECO:0000266"/>
    <property type="project" value="RGD"/>
</dbReference>
<dbReference type="GO" id="GO:0050871">
    <property type="term" value="P:positive regulation of B cell activation"/>
    <property type="evidence" value="ECO:0000266"/>
    <property type="project" value="RGD"/>
</dbReference>
<dbReference type="GO" id="GO:2000538">
    <property type="term" value="P:positive regulation of B cell chemotaxis"/>
    <property type="evidence" value="ECO:0000266"/>
    <property type="project" value="RGD"/>
</dbReference>
<dbReference type="GO" id="GO:0030890">
    <property type="term" value="P:positive regulation of B cell proliferation"/>
    <property type="evidence" value="ECO:0000266"/>
    <property type="project" value="RGD"/>
</dbReference>
<dbReference type="GO" id="GO:0030335">
    <property type="term" value="P:positive regulation of cell migration"/>
    <property type="evidence" value="ECO:0000266"/>
    <property type="project" value="RGD"/>
</dbReference>
<dbReference type="GO" id="GO:0008284">
    <property type="term" value="P:positive regulation of cell population proliferation"/>
    <property type="evidence" value="ECO:0000314"/>
    <property type="project" value="RGD"/>
</dbReference>
<dbReference type="GO" id="GO:1901857">
    <property type="term" value="P:positive regulation of cellular respiration"/>
    <property type="evidence" value="ECO:0000266"/>
    <property type="project" value="RGD"/>
</dbReference>
<dbReference type="GO" id="GO:0032722">
    <property type="term" value="P:positive regulation of chemokine production"/>
    <property type="evidence" value="ECO:0000266"/>
    <property type="project" value="RGD"/>
</dbReference>
<dbReference type="GO" id="GO:0120162">
    <property type="term" value="P:positive regulation of cold-induced thermogenesis"/>
    <property type="evidence" value="ECO:0000250"/>
    <property type="project" value="YuBioLab"/>
</dbReference>
<dbReference type="GO" id="GO:0002230">
    <property type="term" value="P:positive regulation of defense response to virus by host"/>
    <property type="evidence" value="ECO:0000314"/>
    <property type="project" value="RGD"/>
</dbReference>
<dbReference type="GO" id="GO:0045893">
    <property type="term" value="P:positive regulation of DNA-templated transcription"/>
    <property type="evidence" value="ECO:0000314"/>
    <property type="project" value="RGD"/>
</dbReference>
<dbReference type="GO" id="GO:2000424">
    <property type="term" value="P:positive regulation of eosinophil chemotaxis"/>
    <property type="evidence" value="ECO:0000314"/>
    <property type="project" value="RGD"/>
</dbReference>
<dbReference type="GO" id="GO:1903142">
    <property type="term" value="P:positive regulation of establishment of endothelial barrier"/>
    <property type="evidence" value="ECO:0000266"/>
    <property type="project" value="RGD"/>
</dbReference>
<dbReference type="GO" id="GO:0010628">
    <property type="term" value="P:positive regulation of gene expression"/>
    <property type="evidence" value="ECO:0000314"/>
    <property type="project" value="ARUK-UCL"/>
</dbReference>
<dbReference type="GO" id="GO:0002639">
    <property type="term" value="P:positive regulation of immunoglobulin production"/>
    <property type="evidence" value="ECO:0000266"/>
    <property type="project" value="RGD"/>
</dbReference>
<dbReference type="GO" id="GO:0032733">
    <property type="term" value="P:positive regulation of interleukin-10 production"/>
    <property type="evidence" value="ECO:0000314"/>
    <property type="project" value="RGD"/>
</dbReference>
<dbReference type="GO" id="GO:0032736">
    <property type="term" value="P:positive regulation of interleukin-13 production"/>
    <property type="evidence" value="ECO:0000266"/>
    <property type="project" value="RGD"/>
</dbReference>
<dbReference type="GO" id="GO:0048295">
    <property type="term" value="P:positive regulation of isotype switching to IgE isotypes"/>
    <property type="evidence" value="ECO:0000266"/>
    <property type="project" value="RGD"/>
</dbReference>
<dbReference type="GO" id="GO:0048304">
    <property type="term" value="P:positive regulation of isotype switching to IgG isotypes"/>
    <property type="evidence" value="ECO:0000266"/>
    <property type="project" value="RGD"/>
</dbReference>
<dbReference type="GO" id="GO:0016239">
    <property type="term" value="P:positive regulation of macroautophagy"/>
    <property type="evidence" value="ECO:0000250"/>
    <property type="project" value="UniProtKB"/>
</dbReference>
<dbReference type="GO" id="GO:0043306">
    <property type="term" value="P:positive regulation of mast cell degranulation"/>
    <property type="evidence" value="ECO:0000266"/>
    <property type="project" value="RGD"/>
</dbReference>
<dbReference type="GO" id="GO:0045348">
    <property type="term" value="P:positive regulation of MHC class II biosynthetic process"/>
    <property type="evidence" value="ECO:0000266"/>
    <property type="project" value="RGD"/>
</dbReference>
<dbReference type="GO" id="GO:0071677">
    <property type="term" value="P:positive regulation of mononuclear cell migration"/>
    <property type="evidence" value="ECO:0000314"/>
    <property type="project" value="RGD"/>
</dbReference>
<dbReference type="GO" id="GO:1901741">
    <property type="term" value="P:positive regulation of myoblast fusion"/>
    <property type="evidence" value="ECO:0000266"/>
    <property type="project" value="RGD"/>
</dbReference>
<dbReference type="GO" id="GO:1903428">
    <property type="term" value="P:positive regulation of reactive oxygen species biosynthetic process"/>
    <property type="evidence" value="ECO:0000314"/>
    <property type="project" value="RGD"/>
</dbReference>
<dbReference type="GO" id="GO:0046427">
    <property type="term" value="P:positive regulation of receptor signaling pathway via JAK-STAT"/>
    <property type="evidence" value="ECO:0000266"/>
    <property type="project" value="RGD"/>
</dbReference>
<dbReference type="GO" id="GO:0048260">
    <property type="term" value="P:positive regulation of receptor-mediated endocytosis"/>
    <property type="evidence" value="ECO:0000314"/>
    <property type="project" value="ARUK-UCL"/>
</dbReference>
<dbReference type="GO" id="GO:0045582">
    <property type="term" value="P:positive regulation of T cell differentiation"/>
    <property type="evidence" value="ECO:0000266"/>
    <property type="project" value="RGD"/>
</dbReference>
<dbReference type="GO" id="GO:0042102">
    <property type="term" value="P:positive regulation of T cell proliferation"/>
    <property type="evidence" value="ECO:0000266"/>
    <property type="project" value="RGD"/>
</dbReference>
<dbReference type="GO" id="GO:2000553">
    <property type="term" value="P:positive regulation of T-helper 2 cell cytokine production"/>
    <property type="evidence" value="ECO:0000266"/>
    <property type="project" value="RGD"/>
</dbReference>
<dbReference type="GO" id="GO:0045944">
    <property type="term" value="P:positive regulation of transcription by RNA polymerase II"/>
    <property type="evidence" value="ECO:0000266"/>
    <property type="project" value="RGD"/>
</dbReference>
<dbReference type="GO" id="GO:0050776">
    <property type="term" value="P:regulation of immune response"/>
    <property type="evidence" value="ECO:0000266"/>
    <property type="project" value="RGD"/>
</dbReference>
<dbReference type="GO" id="GO:0046825">
    <property type="term" value="P:regulation of protein export from nucleus"/>
    <property type="evidence" value="ECO:0000266"/>
    <property type="project" value="RGD"/>
</dbReference>
<dbReference type="GO" id="GO:0010155">
    <property type="term" value="P:regulation of proton transport"/>
    <property type="evidence" value="ECO:0000314"/>
    <property type="project" value="RGD"/>
</dbReference>
<dbReference type="GO" id="GO:0034097">
    <property type="term" value="P:response to cytokine"/>
    <property type="evidence" value="ECO:0000270"/>
    <property type="project" value="RGD"/>
</dbReference>
<dbReference type="GO" id="GO:0045471">
    <property type="term" value="P:response to ethanol"/>
    <property type="evidence" value="ECO:0000270"/>
    <property type="project" value="RGD"/>
</dbReference>
<dbReference type="GO" id="GO:0033595">
    <property type="term" value="P:response to genistein"/>
    <property type="evidence" value="ECO:0000270"/>
    <property type="project" value="RGD"/>
</dbReference>
<dbReference type="GO" id="GO:0009624">
    <property type="term" value="P:response to nematode"/>
    <property type="evidence" value="ECO:0000266"/>
    <property type="project" value="RGD"/>
</dbReference>
<dbReference type="GO" id="GO:0007584">
    <property type="term" value="P:response to nutrient"/>
    <property type="evidence" value="ECO:0000270"/>
    <property type="project" value="RGD"/>
</dbReference>
<dbReference type="GO" id="GO:0010269">
    <property type="term" value="P:response to selenium ion"/>
    <property type="evidence" value="ECO:0000266"/>
    <property type="project" value="RGD"/>
</dbReference>
<dbReference type="GO" id="GO:0009410">
    <property type="term" value="P:response to xenobiotic stimulus"/>
    <property type="evidence" value="ECO:0000270"/>
    <property type="project" value="RGD"/>
</dbReference>
<dbReference type="GO" id="GO:0060041">
    <property type="term" value="P:retina development in camera-type eye"/>
    <property type="evidence" value="ECO:0000270"/>
    <property type="project" value="RGD"/>
</dbReference>
<dbReference type="GO" id="GO:0042110">
    <property type="term" value="P:T cell activation"/>
    <property type="evidence" value="ECO:0000266"/>
    <property type="project" value="RGD"/>
</dbReference>
<dbReference type="GO" id="GO:0042098">
    <property type="term" value="P:T cell proliferation"/>
    <property type="evidence" value="ECO:0000266"/>
    <property type="project" value="RGD"/>
</dbReference>
<dbReference type="GO" id="GO:0002296">
    <property type="term" value="P:T-helper 1 cell lineage commitment"/>
    <property type="evidence" value="ECO:0000266"/>
    <property type="project" value="RGD"/>
</dbReference>
<dbReference type="GO" id="GO:0045064">
    <property type="term" value="P:T-helper 2 cell differentiation"/>
    <property type="evidence" value="ECO:0000266"/>
    <property type="project" value="RGD"/>
</dbReference>
<dbReference type="GO" id="GO:0006366">
    <property type="term" value="P:transcription by RNA polymerase II"/>
    <property type="evidence" value="ECO:0000266"/>
    <property type="project" value="RGD"/>
</dbReference>
<dbReference type="FunFam" id="1.20.1250.10:FF:000014">
    <property type="entry name" value="Interleukin-4"/>
    <property type="match status" value="1"/>
</dbReference>
<dbReference type="Gene3D" id="1.20.1250.10">
    <property type="match status" value="1"/>
</dbReference>
<dbReference type="InterPro" id="IPR009079">
    <property type="entry name" value="4_helix_cytokine-like_core"/>
</dbReference>
<dbReference type="InterPro" id="IPR002354">
    <property type="entry name" value="IL-4"/>
</dbReference>
<dbReference type="InterPro" id="IPR001325">
    <property type="entry name" value="IL-4/IL-13"/>
</dbReference>
<dbReference type="InterPro" id="IPR018096">
    <property type="entry name" value="IL-4/IL-13_CS"/>
</dbReference>
<dbReference type="PANTHER" id="PTHR47401">
    <property type="entry name" value="INTERLEUKIN-4"/>
    <property type="match status" value="1"/>
</dbReference>
<dbReference type="PANTHER" id="PTHR47401:SF1">
    <property type="entry name" value="INTERLEUKIN-4"/>
    <property type="match status" value="1"/>
</dbReference>
<dbReference type="Pfam" id="PF00727">
    <property type="entry name" value="IL4"/>
    <property type="match status" value="1"/>
</dbReference>
<dbReference type="PIRSF" id="PIRSF001941">
    <property type="entry name" value="Interleukin_4"/>
    <property type="match status" value="1"/>
</dbReference>
<dbReference type="PRINTS" id="PR00431">
    <property type="entry name" value="INTERLEUKIN4"/>
</dbReference>
<dbReference type="SMART" id="SM00190">
    <property type="entry name" value="IL4_13"/>
    <property type="match status" value="1"/>
</dbReference>
<dbReference type="SUPFAM" id="SSF47266">
    <property type="entry name" value="4-helical cytokines"/>
    <property type="match status" value="1"/>
</dbReference>
<dbReference type="PROSITE" id="PS00838">
    <property type="entry name" value="INTERLEUKIN_4_13"/>
    <property type="match status" value="1"/>
</dbReference>
<protein>
    <recommendedName>
        <fullName>Interleukin-4</fullName>
        <shortName>IL-4</shortName>
    </recommendedName>
    <alternativeName>
        <fullName>B-cell IGG differentiation factor</fullName>
    </alternativeName>
    <alternativeName>
        <fullName>B-cell growth factor 1</fullName>
    </alternativeName>
    <alternativeName>
        <fullName>B-cell stimulatory factor 1</fullName>
        <shortName>BSF-1</shortName>
    </alternativeName>
    <alternativeName>
        <fullName>Lymphocyte stimulatory factor 1</fullName>
    </alternativeName>
</protein>
<proteinExistence type="evidence at transcript level"/>